<reference key="1">
    <citation type="journal article" date="2010" name="PLoS ONE">
        <title>The complete genome sequence of Cupriavidus metallidurans strain CH34, a master survivalist in harsh and anthropogenic environments.</title>
        <authorList>
            <person name="Janssen P.J."/>
            <person name="Van Houdt R."/>
            <person name="Moors H."/>
            <person name="Monsieurs P."/>
            <person name="Morin N."/>
            <person name="Michaux A."/>
            <person name="Benotmane M.A."/>
            <person name="Leys N."/>
            <person name="Vallaeys T."/>
            <person name="Lapidus A."/>
            <person name="Monchy S."/>
            <person name="Medigue C."/>
            <person name="Taghavi S."/>
            <person name="McCorkle S."/>
            <person name="Dunn J."/>
            <person name="van der Lelie D."/>
            <person name="Mergeay M."/>
        </authorList>
    </citation>
    <scope>NUCLEOTIDE SEQUENCE [LARGE SCALE GENOMIC DNA]</scope>
    <source>
        <strain>ATCC 43123 / DSM 2839 / NBRC 102507 / CH34</strain>
    </source>
</reference>
<protein>
    <recommendedName>
        <fullName evidence="1">Cell division topological specificity factor</fullName>
    </recommendedName>
</protein>
<evidence type="ECO:0000255" key="1">
    <source>
        <dbReference type="HAMAP-Rule" id="MF_00262"/>
    </source>
</evidence>
<dbReference type="EMBL" id="CP000352">
    <property type="protein sequence ID" value="ABF06919.1"/>
    <property type="molecule type" value="Genomic_DNA"/>
</dbReference>
<dbReference type="RefSeq" id="WP_008645119.1">
    <property type="nucleotide sequence ID" value="NC_007973.1"/>
</dbReference>
<dbReference type="SMR" id="Q1LSF7"/>
<dbReference type="STRING" id="266264.Rmet_0033"/>
<dbReference type="GeneID" id="60822752"/>
<dbReference type="KEGG" id="rme:Rmet_0033"/>
<dbReference type="eggNOG" id="COG0851">
    <property type="taxonomic scope" value="Bacteria"/>
</dbReference>
<dbReference type="HOGENOM" id="CLU_137929_2_1_4"/>
<dbReference type="Proteomes" id="UP000002429">
    <property type="component" value="Chromosome"/>
</dbReference>
<dbReference type="GO" id="GO:0051301">
    <property type="term" value="P:cell division"/>
    <property type="evidence" value="ECO:0007669"/>
    <property type="project" value="UniProtKB-KW"/>
</dbReference>
<dbReference type="GO" id="GO:0032955">
    <property type="term" value="P:regulation of division septum assembly"/>
    <property type="evidence" value="ECO:0007669"/>
    <property type="project" value="InterPro"/>
</dbReference>
<dbReference type="FunFam" id="3.30.1070.10:FF:000001">
    <property type="entry name" value="Cell division topological specificity factor"/>
    <property type="match status" value="1"/>
</dbReference>
<dbReference type="Gene3D" id="3.30.1070.10">
    <property type="entry name" value="Cell division topological specificity factor MinE"/>
    <property type="match status" value="1"/>
</dbReference>
<dbReference type="HAMAP" id="MF_00262">
    <property type="entry name" value="MinE"/>
    <property type="match status" value="1"/>
</dbReference>
<dbReference type="InterPro" id="IPR005527">
    <property type="entry name" value="MinE"/>
</dbReference>
<dbReference type="InterPro" id="IPR036707">
    <property type="entry name" value="MinE_sf"/>
</dbReference>
<dbReference type="NCBIfam" id="TIGR01215">
    <property type="entry name" value="minE"/>
    <property type="match status" value="1"/>
</dbReference>
<dbReference type="NCBIfam" id="NF001422">
    <property type="entry name" value="PRK00296.1"/>
    <property type="match status" value="1"/>
</dbReference>
<dbReference type="NCBIfam" id="NF010595">
    <property type="entry name" value="PRK13989.1"/>
    <property type="match status" value="1"/>
</dbReference>
<dbReference type="Pfam" id="PF03776">
    <property type="entry name" value="MinE"/>
    <property type="match status" value="1"/>
</dbReference>
<dbReference type="SUPFAM" id="SSF55229">
    <property type="entry name" value="Cell division protein MinE topological specificity domain"/>
    <property type="match status" value="1"/>
</dbReference>
<gene>
    <name evidence="1" type="primary">minE</name>
    <name type="ordered locus">Rmet_0033</name>
</gene>
<sequence length="84" mass="9425">MSILSFLLGEKKKSASVAKERLQIILAHERSGHSAPADYLPALQRELVAVISKYVKISDQDLRVSLERQDNLEVLEVKIEIPQA</sequence>
<name>MINE_CUPMC</name>
<comment type="function">
    <text evidence="1">Prevents the cell division inhibition by proteins MinC and MinD at internal division sites while permitting inhibition at polar sites. This ensures cell division at the proper site by restricting the formation of a division septum at the midpoint of the long axis of the cell.</text>
</comment>
<comment type="similarity">
    <text evidence="1">Belongs to the MinE family.</text>
</comment>
<feature type="chain" id="PRO_0000298171" description="Cell division topological specificity factor">
    <location>
        <begin position="1"/>
        <end position="84"/>
    </location>
</feature>
<organism>
    <name type="scientific">Cupriavidus metallidurans (strain ATCC 43123 / DSM 2839 / NBRC 102507 / CH34)</name>
    <name type="common">Ralstonia metallidurans</name>
    <dbReference type="NCBI Taxonomy" id="266264"/>
    <lineage>
        <taxon>Bacteria</taxon>
        <taxon>Pseudomonadati</taxon>
        <taxon>Pseudomonadota</taxon>
        <taxon>Betaproteobacteria</taxon>
        <taxon>Burkholderiales</taxon>
        <taxon>Burkholderiaceae</taxon>
        <taxon>Cupriavidus</taxon>
    </lineage>
</organism>
<keyword id="KW-0131">Cell cycle</keyword>
<keyword id="KW-0132">Cell division</keyword>
<keyword id="KW-1185">Reference proteome</keyword>
<proteinExistence type="inferred from homology"/>
<accession>Q1LSF7</accession>